<reference key="1">
    <citation type="submission" date="2008-08" db="EMBL/GenBank/DDBJ databases">
        <title>Complete sequence of Vibrio fischeri strain MJ11.</title>
        <authorList>
            <person name="Mandel M.J."/>
            <person name="Stabb E.V."/>
            <person name="Ruby E.G."/>
            <person name="Ferriera S."/>
            <person name="Johnson J."/>
            <person name="Kravitz S."/>
            <person name="Beeson K."/>
            <person name="Sutton G."/>
            <person name="Rogers Y.-H."/>
            <person name="Friedman R."/>
            <person name="Frazier M."/>
            <person name="Venter J.C."/>
        </authorList>
    </citation>
    <scope>NUCLEOTIDE SEQUENCE [LARGE SCALE GENOMIC DNA]</scope>
    <source>
        <strain>MJ11</strain>
    </source>
</reference>
<sequence>MSDTPTLALAKDLLSRQSITPEDAGCQELMIKRLEALGFTIEIMVFEDTTNFWARRGNEAPLFTFAGHTDVVPTGDLTHWNTNPFEPTIIDGMLYARGAADMKGSLACMVVAVERFVGEHPNHKGSISFLITSDEEGPFINGTTRVVDTLQERNEIIDMCIVGEPSSTSHVGDVVKNGRRGSLTGNLTVKGIQGHVAYPHIARNPIHQAMPALSELATTVWDNGNDYFPPTSFQIPNMNGGTGASNVIPGTVDIMFNFRFSTESTVDELQQRVVEILDKHDLEYDLDWIINGLPFLTDTGDLLTAVVNAVDTVNQQKPQLLTTGGTSDGRFIAQMGSQVIELGPVNATIHKVNECVNVEDLEKLTDMYQEVLNNLLA</sequence>
<gene>
    <name evidence="1" type="primary">dapE</name>
    <name type="ordered locus">VFMJ11_2048</name>
</gene>
<proteinExistence type="inferred from homology"/>
<dbReference type="EC" id="3.5.1.18" evidence="1"/>
<dbReference type="EMBL" id="CP001139">
    <property type="protein sequence ID" value="ACH65927.1"/>
    <property type="molecule type" value="Genomic_DNA"/>
</dbReference>
<dbReference type="RefSeq" id="WP_012533377.1">
    <property type="nucleotide sequence ID" value="NC_011184.1"/>
</dbReference>
<dbReference type="SMR" id="B5FGX0"/>
<dbReference type="KEGG" id="vfm:VFMJ11_2048"/>
<dbReference type="HOGENOM" id="CLU_021802_4_0_6"/>
<dbReference type="UniPathway" id="UPA00034">
    <property type="reaction ID" value="UER00021"/>
</dbReference>
<dbReference type="Proteomes" id="UP000001857">
    <property type="component" value="Chromosome I"/>
</dbReference>
<dbReference type="GO" id="GO:0008777">
    <property type="term" value="F:acetylornithine deacetylase activity"/>
    <property type="evidence" value="ECO:0007669"/>
    <property type="project" value="TreeGrafter"/>
</dbReference>
<dbReference type="GO" id="GO:0050897">
    <property type="term" value="F:cobalt ion binding"/>
    <property type="evidence" value="ECO:0007669"/>
    <property type="project" value="UniProtKB-UniRule"/>
</dbReference>
<dbReference type="GO" id="GO:0009014">
    <property type="term" value="F:succinyl-diaminopimelate desuccinylase activity"/>
    <property type="evidence" value="ECO:0007669"/>
    <property type="project" value="UniProtKB-UniRule"/>
</dbReference>
<dbReference type="GO" id="GO:0008270">
    <property type="term" value="F:zinc ion binding"/>
    <property type="evidence" value="ECO:0007669"/>
    <property type="project" value="UniProtKB-UniRule"/>
</dbReference>
<dbReference type="GO" id="GO:0019877">
    <property type="term" value="P:diaminopimelate biosynthetic process"/>
    <property type="evidence" value="ECO:0007669"/>
    <property type="project" value="UniProtKB-UniRule"/>
</dbReference>
<dbReference type="GO" id="GO:0006526">
    <property type="term" value="P:L-arginine biosynthetic process"/>
    <property type="evidence" value="ECO:0007669"/>
    <property type="project" value="TreeGrafter"/>
</dbReference>
<dbReference type="GO" id="GO:0009089">
    <property type="term" value="P:lysine biosynthetic process via diaminopimelate"/>
    <property type="evidence" value="ECO:0007669"/>
    <property type="project" value="UniProtKB-UniRule"/>
</dbReference>
<dbReference type="CDD" id="cd03891">
    <property type="entry name" value="M20_DapE_proteobac"/>
    <property type="match status" value="1"/>
</dbReference>
<dbReference type="FunFam" id="3.30.70.360:FF:000011">
    <property type="entry name" value="Succinyl-diaminopimelate desuccinylase"/>
    <property type="match status" value="1"/>
</dbReference>
<dbReference type="FunFam" id="3.40.630.10:FF:000005">
    <property type="entry name" value="Succinyl-diaminopimelate desuccinylase"/>
    <property type="match status" value="1"/>
</dbReference>
<dbReference type="FunFam" id="3.40.630.10:FF:000010">
    <property type="entry name" value="Succinyl-diaminopimelate desuccinylase"/>
    <property type="match status" value="1"/>
</dbReference>
<dbReference type="Gene3D" id="3.40.630.10">
    <property type="entry name" value="Zn peptidases"/>
    <property type="match status" value="2"/>
</dbReference>
<dbReference type="HAMAP" id="MF_01690">
    <property type="entry name" value="DapE"/>
    <property type="match status" value="1"/>
</dbReference>
<dbReference type="InterPro" id="IPR001261">
    <property type="entry name" value="ArgE/DapE_CS"/>
</dbReference>
<dbReference type="InterPro" id="IPR036264">
    <property type="entry name" value="Bact_exopeptidase_dim_dom"/>
</dbReference>
<dbReference type="InterPro" id="IPR005941">
    <property type="entry name" value="DapE_proteobac"/>
</dbReference>
<dbReference type="InterPro" id="IPR002933">
    <property type="entry name" value="Peptidase_M20"/>
</dbReference>
<dbReference type="InterPro" id="IPR011650">
    <property type="entry name" value="Peptidase_M20_dimer"/>
</dbReference>
<dbReference type="InterPro" id="IPR050072">
    <property type="entry name" value="Peptidase_M20A"/>
</dbReference>
<dbReference type="NCBIfam" id="TIGR01246">
    <property type="entry name" value="dapE_proteo"/>
    <property type="match status" value="1"/>
</dbReference>
<dbReference type="NCBIfam" id="NF009557">
    <property type="entry name" value="PRK13009.1"/>
    <property type="match status" value="1"/>
</dbReference>
<dbReference type="PANTHER" id="PTHR43808">
    <property type="entry name" value="ACETYLORNITHINE DEACETYLASE"/>
    <property type="match status" value="1"/>
</dbReference>
<dbReference type="PANTHER" id="PTHR43808:SF31">
    <property type="entry name" value="N-ACETYL-L-CITRULLINE DEACETYLASE"/>
    <property type="match status" value="1"/>
</dbReference>
<dbReference type="Pfam" id="PF07687">
    <property type="entry name" value="M20_dimer"/>
    <property type="match status" value="1"/>
</dbReference>
<dbReference type="Pfam" id="PF01546">
    <property type="entry name" value="Peptidase_M20"/>
    <property type="match status" value="1"/>
</dbReference>
<dbReference type="SUPFAM" id="SSF55031">
    <property type="entry name" value="Bacterial exopeptidase dimerisation domain"/>
    <property type="match status" value="1"/>
</dbReference>
<dbReference type="SUPFAM" id="SSF53187">
    <property type="entry name" value="Zn-dependent exopeptidases"/>
    <property type="match status" value="1"/>
</dbReference>
<dbReference type="PROSITE" id="PS00759">
    <property type="entry name" value="ARGE_DAPE_CPG2_2"/>
    <property type="match status" value="1"/>
</dbReference>
<feature type="chain" id="PRO_0000375769" description="Succinyl-diaminopimelate desuccinylase">
    <location>
        <begin position="1"/>
        <end position="377"/>
    </location>
</feature>
<feature type="active site" evidence="1">
    <location>
        <position position="70"/>
    </location>
</feature>
<feature type="active site" description="Proton acceptor" evidence="1">
    <location>
        <position position="135"/>
    </location>
</feature>
<feature type="binding site" evidence="1">
    <location>
        <position position="68"/>
    </location>
    <ligand>
        <name>Zn(2+)</name>
        <dbReference type="ChEBI" id="CHEBI:29105"/>
        <label>1</label>
    </ligand>
</feature>
<feature type="binding site" evidence="1">
    <location>
        <position position="101"/>
    </location>
    <ligand>
        <name>Zn(2+)</name>
        <dbReference type="ChEBI" id="CHEBI:29105"/>
        <label>1</label>
    </ligand>
</feature>
<feature type="binding site" evidence="1">
    <location>
        <position position="101"/>
    </location>
    <ligand>
        <name>Zn(2+)</name>
        <dbReference type="ChEBI" id="CHEBI:29105"/>
        <label>2</label>
    </ligand>
</feature>
<feature type="binding site" evidence="1">
    <location>
        <position position="136"/>
    </location>
    <ligand>
        <name>Zn(2+)</name>
        <dbReference type="ChEBI" id="CHEBI:29105"/>
        <label>2</label>
    </ligand>
</feature>
<feature type="binding site" evidence="1">
    <location>
        <position position="164"/>
    </location>
    <ligand>
        <name>Zn(2+)</name>
        <dbReference type="ChEBI" id="CHEBI:29105"/>
        <label>1</label>
    </ligand>
</feature>
<feature type="binding site" evidence="1">
    <location>
        <position position="350"/>
    </location>
    <ligand>
        <name>Zn(2+)</name>
        <dbReference type="ChEBI" id="CHEBI:29105"/>
        <label>2</label>
    </ligand>
</feature>
<name>DAPE_ALIFM</name>
<evidence type="ECO:0000255" key="1">
    <source>
        <dbReference type="HAMAP-Rule" id="MF_01690"/>
    </source>
</evidence>
<organism>
    <name type="scientific">Aliivibrio fischeri (strain MJ11)</name>
    <name type="common">Vibrio fischeri</name>
    <dbReference type="NCBI Taxonomy" id="388396"/>
    <lineage>
        <taxon>Bacteria</taxon>
        <taxon>Pseudomonadati</taxon>
        <taxon>Pseudomonadota</taxon>
        <taxon>Gammaproteobacteria</taxon>
        <taxon>Vibrionales</taxon>
        <taxon>Vibrionaceae</taxon>
        <taxon>Aliivibrio</taxon>
    </lineage>
</organism>
<protein>
    <recommendedName>
        <fullName evidence="1">Succinyl-diaminopimelate desuccinylase</fullName>
        <shortName evidence="1">SDAP desuccinylase</shortName>
        <ecNumber evidence="1">3.5.1.18</ecNumber>
    </recommendedName>
    <alternativeName>
        <fullName evidence="1">N-succinyl-LL-2,6-diaminoheptanedioate amidohydrolase</fullName>
    </alternativeName>
</protein>
<comment type="function">
    <text evidence="1">Catalyzes the hydrolysis of N-succinyl-L,L-diaminopimelic acid (SDAP), forming succinate and LL-2,6-diaminopimelate (DAP), an intermediate involved in the bacterial biosynthesis of lysine and meso-diaminopimelic acid, an essential component of bacterial cell walls.</text>
</comment>
<comment type="catalytic activity">
    <reaction evidence="1">
        <text>N-succinyl-(2S,6S)-2,6-diaminopimelate + H2O = (2S,6S)-2,6-diaminopimelate + succinate</text>
        <dbReference type="Rhea" id="RHEA:22608"/>
        <dbReference type="ChEBI" id="CHEBI:15377"/>
        <dbReference type="ChEBI" id="CHEBI:30031"/>
        <dbReference type="ChEBI" id="CHEBI:57609"/>
        <dbReference type="ChEBI" id="CHEBI:58087"/>
        <dbReference type="EC" id="3.5.1.18"/>
    </reaction>
</comment>
<comment type="cofactor">
    <cofactor evidence="1">
        <name>Zn(2+)</name>
        <dbReference type="ChEBI" id="CHEBI:29105"/>
    </cofactor>
    <cofactor evidence="1">
        <name>Co(2+)</name>
        <dbReference type="ChEBI" id="CHEBI:48828"/>
    </cofactor>
    <text evidence="1">Binds 2 Zn(2+) or Co(2+) ions per subunit.</text>
</comment>
<comment type="pathway">
    <text evidence="1">Amino-acid biosynthesis; L-lysine biosynthesis via DAP pathway; LL-2,6-diaminopimelate from (S)-tetrahydrodipicolinate (succinylase route): step 3/3.</text>
</comment>
<comment type="subunit">
    <text evidence="1">Homodimer.</text>
</comment>
<comment type="similarity">
    <text evidence="1">Belongs to the peptidase M20A family. DapE subfamily.</text>
</comment>
<keyword id="KW-0028">Amino-acid biosynthesis</keyword>
<keyword id="KW-0170">Cobalt</keyword>
<keyword id="KW-0220">Diaminopimelate biosynthesis</keyword>
<keyword id="KW-0378">Hydrolase</keyword>
<keyword id="KW-0457">Lysine biosynthesis</keyword>
<keyword id="KW-0479">Metal-binding</keyword>
<keyword id="KW-0862">Zinc</keyword>
<accession>B5FGX0</accession>